<dbReference type="EMBL" id="BA000002">
    <property type="protein sequence ID" value="BAA81083.2"/>
    <property type="molecule type" value="Genomic_DNA"/>
</dbReference>
<dbReference type="PIR" id="C72512">
    <property type="entry name" value="C72512"/>
</dbReference>
<dbReference type="RefSeq" id="WP_010866776.1">
    <property type="nucleotide sequence ID" value="NC_000854.2"/>
</dbReference>
<dbReference type="SMR" id="Q9YA66"/>
<dbReference type="STRING" id="272557.APE_2072.1"/>
<dbReference type="EnsemblBacteria" id="BAA81083">
    <property type="protein sequence ID" value="BAA81083"/>
    <property type="gene ID" value="APE_2072.1"/>
</dbReference>
<dbReference type="GeneID" id="1445172"/>
<dbReference type="KEGG" id="ape:APE_2072.1"/>
<dbReference type="PATRIC" id="fig|272557.25.peg.1379"/>
<dbReference type="eggNOG" id="arCOG01257">
    <property type="taxonomic scope" value="Archaea"/>
</dbReference>
<dbReference type="BRENDA" id="3.6.4.B10">
    <property type="organism ID" value="171"/>
</dbReference>
<dbReference type="Proteomes" id="UP000002518">
    <property type="component" value="Chromosome"/>
</dbReference>
<dbReference type="GO" id="GO:0005524">
    <property type="term" value="F:ATP binding"/>
    <property type="evidence" value="ECO:0007669"/>
    <property type="project" value="UniProtKB-KW"/>
</dbReference>
<dbReference type="GO" id="GO:0016887">
    <property type="term" value="F:ATP hydrolysis activity"/>
    <property type="evidence" value="ECO:0007669"/>
    <property type="project" value="InterPro"/>
</dbReference>
<dbReference type="GO" id="GO:0140662">
    <property type="term" value="F:ATP-dependent protein folding chaperone"/>
    <property type="evidence" value="ECO:0007669"/>
    <property type="project" value="InterPro"/>
</dbReference>
<dbReference type="GO" id="GO:0051082">
    <property type="term" value="F:unfolded protein binding"/>
    <property type="evidence" value="ECO:0007669"/>
    <property type="project" value="InterPro"/>
</dbReference>
<dbReference type="CDD" id="cd03343">
    <property type="entry name" value="cpn60"/>
    <property type="match status" value="1"/>
</dbReference>
<dbReference type="FunFam" id="1.10.560.10:FF:000017">
    <property type="entry name" value="T-complex protein 1 subunit eta"/>
    <property type="match status" value="1"/>
</dbReference>
<dbReference type="Gene3D" id="3.50.7.10">
    <property type="entry name" value="GroEL"/>
    <property type="match status" value="1"/>
</dbReference>
<dbReference type="Gene3D" id="1.10.560.10">
    <property type="entry name" value="GroEL-like equatorial domain"/>
    <property type="match status" value="1"/>
</dbReference>
<dbReference type="Gene3D" id="3.30.260.10">
    <property type="entry name" value="TCP-1-like chaperonin intermediate domain"/>
    <property type="match status" value="1"/>
</dbReference>
<dbReference type="InterPro" id="IPR017998">
    <property type="entry name" value="Chaperone_TCP-1"/>
</dbReference>
<dbReference type="InterPro" id="IPR002194">
    <property type="entry name" value="Chaperonin_TCP-1_CS"/>
</dbReference>
<dbReference type="InterPro" id="IPR002423">
    <property type="entry name" value="Cpn60/GroEL/TCP-1"/>
</dbReference>
<dbReference type="InterPro" id="IPR027409">
    <property type="entry name" value="GroEL-like_apical_dom_sf"/>
</dbReference>
<dbReference type="InterPro" id="IPR027413">
    <property type="entry name" value="GROEL-like_equatorial_sf"/>
</dbReference>
<dbReference type="InterPro" id="IPR027410">
    <property type="entry name" value="TCP-1-like_intermed_sf"/>
</dbReference>
<dbReference type="InterPro" id="IPR053374">
    <property type="entry name" value="TCP-1_chaperonin"/>
</dbReference>
<dbReference type="InterPro" id="IPR054827">
    <property type="entry name" value="thermosome_alpha"/>
</dbReference>
<dbReference type="InterPro" id="IPR012714">
    <property type="entry name" value="Thermosome_arc"/>
</dbReference>
<dbReference type="NCBIfam" id="NF041082">
    <property type="entry name" value="thermosome_alpha"/>
    <property type="match status" value="1"/>
</dbReference>
<dbReference type="NCBIfam" id="TIGR02339">
    <property type="entry name" value="thermosome_arch"/>
    <property type="match status" value="1"/>
</dbReference>
<dbReference type="NCBIfam" id="NF041083">
    <property type="entry name" value="thermosome_beta"/>
    <property type="match status" value="1"/>
</dbReference>
<dbReference type="PANTHER" id="PTHR11353">
    <property type="entry name" value="CHAPERONIN"/>
    <property type="match status" value="1"/>
</dbReference>
<dbReference type="Pfam" id="PF00118">
    <property type="entry name" value="Cpn60_TCP1"/>
    <property type="match status" value="1"/>
</dbReference>
<dbReference type="PRINTS" id="PR00304">
    <property type="entry name" value="TCOMPLEXTCP1"/>
</dbReference>
<dbReference type="SUPFAM" id="SSF52029">
    <property type="entry name" value="GroEL apical domain-like"/>
    <property type="match status" value="1"/>
</dbReference>
<dbReference type="SUPFAM" id="SSF48592">
    <property type="entry name" value="GroEL equatorial domain-like"/>
    <property type="match status" value="1"/>
</dbReference>
<dbReference type="SUPFAM" id="SSF54849">
    <property type="entry name" value="GroEL-intermediate domain like"/>
    <property type="match status" value="1"/>
</dbReference>
<dbReference type="PROSITE" id="PS00750">
    <property type="entry name" value="TCP1_1"/>
    <property type="match status" value="1"/>
</dbReference>
<dbReference type="PROSITE" id="PS00751">
    <property type="entry name" value="TCP1_2"/>
    <property type="match status" value="1"/>
</dbReference>
<dbReference type="PROSITE" id="PS00995">
    <property type="entry name" value="TCP1_3"/>
    <property type="match status" value="1"/>
</dbReference>
<name>THSB_AERPE</name>
<proteinExistence type="inferred from homology"/>
<organism>
    <name type="scientific">Aeropyrum pernix (strain ATCC 700893 / DSM 11879 / JCM 9820 / NBRC 100138 / K1)</name>
    <dbReference type="NCBI Taxonomy" id="272557"/>
    <lineage>
        <taxon>Archaea</taxon>
        <taxon>Thermoproteota</taxon>
        <taxon>Thermoprotei</taxon>
        <taxon>Desulfurococcales</taxon>
        <taxon>Desulfurococcaceae</taxon>
        <taxon>Aeropyrum</taxon>
    </lineage>
</organism>
<keyword id="KW-0067">ATP-binding</keyword>
<keyword id="KW-0143">Chaperone</keyword>
<keyword id="KW-0547">Nucleotide-binding</keyword>
<keyword id="KW-1185">Reference proteome</keyword>
<sequence length="548" mass="60430">MAIQQQPMTEPVGIPVIILKEGTQRSYGREALRANIMAVRAIAQILKTTYGPKGMDKMLVDSLGDITITNNGATILDKMDVAHPAAKMLVQISKGQEDEAGDGTKTTVIFAGELLKEAEKLLDINIHPTIIVEGYKEALRKASEVIESIAEPVSYDDVEKLKLIAKTSLNSKAVAEARDYFAELAVEAVRTVAERRGDRWYVDLNNIQIVKKHGGSLRDTRLVRGIVLDKEVVHPDMPRRVENARIALLDTPLEIEKPEIDLEISITSPEQIKALYEKQERILQEKIEKIAATGANVVITQKGIDDVAQHFLAKKGILAVRRVKRSDIEKIARATGARIVTDIEDLRPEDLGYAELVEERKVGEDKMVFIEGAKNPKSVTILLRGGFERLVDEAERSLHDALSVVADAIMDGKIVAGGGAVEAEVAKVLYEYASKLPGKTQLAVEAFARAVEALPQALAHNAGHDPIEVLVKLRSAHEKPENKWYGVDLDTGEIVDMWSRGVLEPMRVKLNALKAATEVASLILRIDDVIAARKEEEEKEEKRGGEEE</sequence>
<reference key="1">
    <citation type="journal article" date="1999" name="DNA Res.">
        <title>Complete genome sequence of an aerobic hyper-thermophilic crenarchaeon, Aeropyrum pernix K1.</title>
        <authorList>
            <person name="Kawarabayasi Y."/>
            <person name="Hino Y."/>
            <person name="Horikawa H."/>
            <person name="Yamazaki S."/>
            <person name="Haikawa Y."/>
            <person name="Jin-no K."/>
            <person name="Takahashi M."/>
            <person name="Sekine M."/>
            <person name="Baba S."/>
            <person name="Ankai A."/>
            <person name="Kosugi H."/>
            <person name="Hosoyama A."/>
            <person name="Fukui S."/>
            <person name="Nagai Y."/>
            <person name="Nishijima K."/>
            <person name="Nakazawa H."/>
            <person name="Takamiya M."/>
            <person name="Masuda S."/>
            <person name="Funahashi T."/>
            <person name="Tanaka T."/>
            <person name="Kudoh Y."/>
            <person name="Yamazaki J."/>
            <person name="Kushida N."/>
            <person name="Oguchi A."/>
            <person name="Aoki K."/>
            <person name="Kubota K."/>
            <person name="Nakamura Y."/>
            <person name="Nomura N."/>
            <person name="Sako Y."/>
            <person name="Kikuchi H."/>
        </authorList>
    </citation>
    <scope>NUCLEOTIDE SEQUENCE [LARGE SCALE GENOMIC DNA]</scope>
    <source>
        <strain>ATCC 700893 / DSM 11879 / JCM 9820 / NBRC 100138 / K1</strain>
    </source>
</reference>
<protein>
    <recommendedName>
        <fullName>Thermosome subunit beta</fullName>
    </recommendedName>
    <alternativeName>
        <fullName>Chaperonin subunit beta</fullName>
    </alternativeName>
    <alternativeName>
        <fullName>Thermosome subunit 2</fullName>
    </alternativeName>
</protein>
<gene>
    <name type="primary">thsB</name>
    <name type="ordered locus">APE_2072.1</name>
</gene>
<comment type="function">
    <text evidence="1">Molecular chaperone; binds unfolded polypeptides in vitro, and has a weak ATPase activity.</text>
</comment>
<comment type="subunit">
    <text evidence="1">Forms a Heterooligomeric complex of two stacked eight-membered rings.</text>
</comment>
<comment type="similarity">
    <text evidence="2">Belongs to the TCP-1 chaperonin family.</text>
</comment>
<feature type="chain" id="PRO_0000128380" description="Thermosome subunit beta">
    <location>
        <begin position="1"/>
        <end position="548"/>
    </location>
</feature>
<accession>Q9YA66</accession>
<evidence type="ECO:0000250" key="1"/>
<evidence type="ECO:0000305" key="2"/>